<organism>
    <name type="scientific">Citrus sinensis</name>
    <name type="common">Sweet orange</name>
    <name type="synonym">Citrus aurantium var. sinensis</name>
    <dbReference type="NCBI Taxonomy" id="2711"/>
    <lineage>
        <taxon>Eukaryota</taxon>
        <taxon>Viridiplantae</taxon>
        <taxon>Streptophyta</taxon>
        <taxon>Embryophyta</taxon>
        <taxon>Tracheophyta</taxon>
        <taxon>Spermatophyta</taxon>
        <taxon>Magnoliopsida</taxon>
        <taxon>eudicotyledons</taxon>
        <taxon>Gunneridae</taxon>
        <taxon>Pentapetalae</taxon>
        <taxon>rosids</taxon>
        <taxon>malvids</taxon>
        <taxon>Sapindales</taxon>
        <taxon>Rutaceae</taxon>
        <taxon>Aurantioideae</taxon>
        <taxon>Citrus</taxon>
    </lineage>
</organism>
<reference key="1">
    <citation type="journal article" date="2006" name="BMC Plant Biol.">
        <title>The complete chloroplast genome sequence of Citrus sinensis (L.) Osbeck var 'Ridge Pineapple': organization and phylogenetic relationships to other angiosperms.</title>
        <authorList>
            <person name="Bausher M.G."/>
            <person name="Singh N.D."/>
            <person name="Lee S.-B."/>
            <person name="Jansen R.K."/>
            <person name="Daniell H."/>
        </authorList>
    </citation>
    <scope>NUCLEOTIDE SEQUENCE [LARGE SCALE GENOMIC DNA]</scope>
    <source>
        <strain>cv. Osbeck var. Ridge Pineapple</strain>
    </source>
</reference>
<keyword id="KW-0150">Chloroplast</keyword>
<keyword id="KW-0472">Membrane</keyword>
<keyword id="KW-0602">Photosynthesis</keyword>
<keyword id="KW-0604">Photosystem II</keyword>
<keyword id="KW-0934">Plastid</keyword>
<keyword id="KW-0793">Thylakoid</keyword>
<keyword id="KW-0812">Transmembrane</keyword>
<keyword id="KW-1133">Transmembrane helix</keyword>
<proteinExistence type="inferred from homology"/>
<accession>Q09MF0</accession>
<feature type="chain" id="PRO_0000276289" description="Photosystem II reaction center protein T">
    <location>
        <begin position="1"/>
        <end position="35"/>
    </location>
</feature>
<feature type="transmembrane region" description="Helical" evidence="1">
    <location>
        <begin position="3"/>
        <end position="23"/>
    </location>
</feature>
<dbReference type="EMBL" id="DQ864733">
    <property type="protein sequence ID" value="ABI49046.1"/>
    <property type="molecule type" value="Genomic_DNA"/>
</dbReference>
<dbReference type="RefSeq" id="YP_740503.1">
    <property type="nucleotide sequence ID" value="NC_008334.1"/>
</dbReference>
<dbReference type="SMR" id="Q09MF0"/>
<dbReference type="GeneID" id="4271126"/>
<dbReference type="KEGG" id="cit:4271126"/>
<dbReference type="OrthoDB" id="750047at71240"/>
<dbReference type="GO" id="GO:0009535">
    <property type="term" value="C:chloroplast thylakoid membrane"/>
    <property type="evidence" value="ECO:0007669"/>
    <property type="project" value="UniProtKB-SubCell"/>
</dbReference>
<dbReference type="GO" id="GO:0009539">
    <property type="term" value="C:photosystem II reaction center"/>
    <property type="evidence" value="ECO:0007669"/>
    <property type="project" value="InterPro"/>
</dbReference>
<dbReference type="GO" id="GO:0015979">
    <property type="term" value="P:photosynthesis"/>
    <property type="evidence" value="ECO:0007669"/>
    <property type="project" value="UniProtKB-UniRule"/>
</dbReference>
<dbReference type="HAMAP" id="MF_00808">
    <property type="entry name" value="PSII_PsbT"/>
    <property type="match status" value="1"/>
</dbReference>
<dbReference type="InterPro" id="IPR001743">
    <property type="entry name" value="PSII_PsbT"/>
</dbReference>
<dbReference type="InterPro" id="IPR037268">
    <property type="entry name" value="PSII_PsbT_sf"/>
</dbReference>
<dbReference type="PANTHER" id="PTHR36411">
    <property type="match status" value="1"/>
</dbReference>
<dbReference type="PANTHER" id="PTHR36411:SF2">
    <property type="entry name" value="PHOTOSYSTEM II REACTION CENTER PROTEIN T"/>
    <property type="match status" value="1"/>
</dbReference>
<dbReference type="Pfam" id="PF01405">
    <property type="entry name" value="PsbT"/>
    <property type="match status" value="1"/>
</dbReference>
<dbReference type="SUPFAM" id="SSF161029">
    <property type="entry name" value="Photosystem II reaction center protein T, PsbT"/>
    <property type="match status" value="1"/>
</dbReference>
<comment type="function">
    <text evidence="1">Found at the monomer-monomer interface of the photosystem II (PS II) dimer, plays a role in assembly and dimerization of PSII. PSII is a light-driven water plastoquinone oxidoreductase, using light energy to abstract electrons from H(2)O, generating a proton gradient subsequently used for ATP formation.</text>
</comment>
<comment type="subunit">
    <text evidence="1">PSII is composed of 1 copy each of membrane proteins PsbA, PsbB, PsbC, PsbD, PsbE, PsbF, PsbH, PsbI, PsbJ, PsbK, PsbL, PsbM, PsbT, PsbY, PsbZ, Psb30/Ycf12, at least 3 peripheral proteins of the oxygen-evolving complex and a large number of cofactors. It forms dimeric complexes.</text>
</comment>
<comment type="subcellular location">
    <subcellularLocation>
        <location evidence="1">Plastid</location>
        <location evidence="1">Chloroplast thylakoid membrane</location>
        <topology evidence="1">Single-pass membrane protein</topology>
    </subcellularLocation>
</comment>
<comment type="similarity">
    <text evidence="1">Belongs to the PsbT family.</text>
</comment>
<gene>
    <name evidence="1" type="primary">psbT</name>
</gene>
<name>PSBT_CITSI</name>
<sequence>MEALVYTFLLVSTLGIIFFAIFFREPPKVPTKKTK</sequence>
<protein>
    <recommendedName>
        <fullName evidence="1">Photosystem II reaction center protein T</fullName>
        <shortName evidence="1">PSII-T</shortName>
    </recommendedName>
</protein>
<geneLocation type="chloroplast"/>
<evidence type="ECO:0000255" key="1">
    <source>
        <dbReference type="HAMAP-Rule" id="MF_00808"/>
    </source>
</evidence>